<evidence type="ECO:0000255" key="1">
    <source>
        <dbReference type="HAMAP-Rule" id="MF_00251"/>
    </source>
</evidence>
<evidence type="ECO:0000305" key="2"/>
<reference key="1">
    <citation type="journal article" date="2004" name="Proc. Natl. Acad. Sci. U.S.A.">
        <title>Comparison of the genome of the oral pathogen Treponema denticola with other spirochete genomes.</title>
        <authorList>
            <person name="Seshadri R."/>
            <person name="Myers G.S.A."/>
            <person name="Tettelin H."/>
            <person name="Eisen J.A."/>
            <person name="Heidelberg J.F."/>
            <person name="Dodson R.J."/>
            <person name="Davidsen T.M."/>
            <person name="DeBoy R.T."/>
            <person name="Fouts D.E."/>
            <person name="Haft D.H."/>
            <person name="Selengut J."/>
            <person name="Ren Q."/>
            <person name="Brinkac L.M."/>
            <person name="Madupu R."/>
            <person name="Kolonay J.F."/>
            <person name="Durkin S.A."/>
            <person name="Daugherty S.C."/>
            <person name="Shetty J."/>
            <person name="Shvartsbeyn A."/>
            <person name="Gebregeorgis E."/>
            <person name="Geer K."/>
            <person name="Tsegaye G."/>
            <person name="Malek J.A."/>
            <person name="Ayodeji B."/>
            <person name="Shatsman S."/>
            <person name="McLeod M.P."/>
            <person name="Smajs D."/>
            <person name="Howell J.K."/>
            <person name="Pal S."/>
            <person name="Amin A."/>
            <person name="Vashisth P."/>
            <person name="McNeill T.Z."/>
            <person name="Xiang Q."/>
            <person name="Sodergren E."/>
            <person name="Baca E."/>
            <person name="Weinstock G.M."/>
            <person name="Norris S.J."/>
            <person name="Fraser C.M."/>
            <person name="Paulsen I.T."/>
        </authorList>
    </citation>
    <scope>NUCLEOTIDE SEQUENCE [LARGE SCALE GENOMIC DNA]</scope>
    <source>
        <strain>ATCC 35405 / DSM 14222 / CIP 103919 / JCM 8153 / KCTC 15104</strain>
    </source>
</reference>
<sequence length="37" mass="4277">MKVRTSVKPICDKCKVIKRNGIVRIICTNPKHKQRQG</sequence>
<proteinExistence type="inferred from homology"/>
<accession>Q73PL1</accession>
<name>RL36_TREDE</name>
<protein>
    <recommendedName>
        <fullName evidence="1">Large ribosomal subunit protein bL36</fullName>
    </recommendedName>
    <alternativeName>
        <fullName evidence="2">50S ribosomal protein L36</fullName>
    </alternativeName>
</protein>
<organism>
    <name type="scientific">Treponema denticola (strain ATCC 35405 / DSM 14222 / CIP 103919 / JCM 8153 / KCTC 15104)</name>
    <dbReference type="NCBI Taxonomy" id="243275"/>
    <lineage>
        <taxon>Bacteria</taxon>
        <taxon>Pseudomonadati</taxon>
        <taxon>Spirochaetota</taxon>
        <taxon>Spirochaetia</taxon>
        <taxon>Spirochaetales</taxon>
        <taxon>Treponemataceae</taxon>
        <taxon>Treponema</taxon>
    </lineage>
</organism>
<comment type="similarity">
    <text evidence="1">Belongs to the bacterial ribosomal protein bL36 family.</text>
</comment>
<gene>
    <name evidence="1" type="primary">rpmJ</name>
    <name type="ordered locus">TDE_0788</name>
</gene>
<keyword id="KW-1185">Reference proteome</keyword>
<keyword id="KW-0687">Ribonucleoprotein</keyword>
<keyword id="KW-0689">Ribosomal protein</keyword>
<feature type="chain" id="PRO_0000126287" description="Large ribosomal subunit protein bL36">
    <location>
        <begin position="1"/>
        <end position="37"/>
    </location>
</feature>
<dbReference type="EMBL" id="AE017226">
    <property type="protein sequence ID" value="AAS11279.1"/>
    <property type="molecule type" value="Genomic_DNA"/>
</dbReference>
<dbReference type="RefSeq" id="NP_971398.1">
    <property type="nucleotide sequence ID" value="NC_002967.9"/>
</dbReference>
<dbReference type="RefSeq" id="WP_002672206.1">
    <property type="nucleotide sequence ID" value="NC_002967.9"/>
</dbReference>
<dbReference type="SMR" id="Q73PL1"/>
<dbReference type="STRING" id="243275.TDE_0788"/>
<dbReference type="PaxDb" id="243275-TDE_0788"/>
<dbReference type="GeneID" id="2740666"/>
<dbReference type="KEGG" id="tde:TDE_0788"/>
<dbReference type="PATRIC" id="fig|243275.7.peg.761"/>
<dbReference type="eggNOG" id="COG0257">
    <property type="taxonomic scope" value="Bacteria"/>
</dbReference>
<dbReference type="HOGENOM" id="CLU_135723_6_2_12"/>
<dbReference type="OrthoDB" id="9802520at2"/>
<dbReference type="Proteomes" id="UP000008212">
    <property type="component" value="Chromosome"/>
</dbReference>
<dbReference type="GO" id="GO:0005737">
    <property type="term" value="C:cytoplasm"/>
    <property type="evidence" value="ECO:0007669"/>
    <property type="project" value="UniProtKB-ARBA"/>
</dbReference>
<dbReference type="GO" id="GO:1990904">
    <property type="term" value="C:ribonucleoprotein complex"/>
    <property type="evidence" value="ECO:0007669"/>
    <property type="project" value="UniProtKB-KW"/>
</dbReference>
<dbReference type="GO" id="GO:0005840">
    <property type="term" value="C:ribosome"/>
    <property type="evidence" value="ECO:0007669"/>
    <property type="project" value="UniProtKB-KW"/>
</dbReference>
<dbReference type="GO" id="GO:0003735">
    <property type="term" value="F:structural constituent of ribosome"/>
    <property type="evidence" value="ECO:0007669"/>
    <property type="project" value="InterPro"/>
</dbReference>
<dbReference type="GO" id="GO:0006412">
    <property type="term" value="P:translation"/>
    <property type="evidence" value="ECO:0007669"/>
    <property type="project" value="UniProtKB-UniRule"/>
</dbReference>
<dbReference type="HAMAP" id="MF_00251">
    <property type="entry name" value="Ribosomal_bL36"/>
    <property type="match status" value="1"/>
</dbReference>
<dbReference type="InterPro" id="IPR000473">
    <property type="entry name" value="Ribosomal_bL36"/>
</dbReference>
<dbReference type="InterPro" id="IPR035977">
    <property type="entry name" value="Ribosomal_bL36_sp"/>
</dbReference>
<dbReference type="NCBIfam" id="TIGR01022">
    <property type="entry name" value="rpmJ_bact"/>
    <property type="match status" value="1"/>
</dbReference>
<dbReference type="PANTHER" id="PTHR42888">
    <property type="entry name" value="50S RIBOSOMAL PROTEIN L36, CHLOROPLASTIC"/>
    <property type="match status" value="1"/>
</dbReference>
<dbReference type="PANTHER" id="PTHR42888:SF1">
    <property type="entry name" value="LARGE RIBOSOMAL SUBUNIT PROTEIN BL36C"/>
    <property type="match status" value="1"/>
</dbReference>
<dbReference type="Pfam" id="PF00444">
    <property type="entry name" value="Ribosomal_L36"/>
    <property type="match status" value="1"/>
</dbReference>
<dbReference type="SUPFAM" id="SSF57840">
    <property type="entry name" value="Ribosomal protein L36"/>
    <property type="match status" value="1"/>
</dbReference>
<dbReference type="PROSITE" id="PS00828">
    <property type="entry name" value="RIBOSOMAL_L36"/>
    <property type="match status" value="1"/>
</dbReference>